<name>PA55H_SHEEP</name>
<accession>P83500</accession>
<feature type="chain" id="PRO_0000199521" description="Pregnancy-associated glycoprotein 55h">
    <location>
        <begin position="1"/>
        <end position="20" status="greater than"/>
    </location>
</feature>
<feature type="glycosylation site" description="N-linked (GlcNAc...) asparagine" evidence="2">
    <location>
        <position position="4"/>
    </location>
</feature>
<feature type="non-terminal residue" evidence="4">
    <location>
        <position position="20"/>
    </location>
</feature>
<sequence>RVSNLTIHPLRNIIDLRYVG</sequence>
<proteinExistence type="evidence at protein level"/>
<keyword id="KW-0064">Aspartyl protease</keyword>
<keyword id="KW-0903">Direct protein sequencing</keyword>
<keyword id="KW-0325">Glycoprotein</keyword>
<keyword id="KW-0378">Hydrolase</keyword>
<keyword id="KW-0645">Protease</keyword>
<keyword id="KW-1185">Reference proteome</keyword>
<keyword id="KW-0964">Secreted</keyword>
<evidence type="ECO:0000250" key="1">
    <source>
        <dbReference type="UniProtKB" id="Q28755"/>
    </source>
</evidence>
<evidence type="ECO:0000255" key="2"/>
<evidence type="ECO:0000269" key="3">
    <source>
    </source>
</evidence>
<evidence type="ECO:0000303" key="4">
    <source>
    </source>
</evidence>
<evidence type="ECO:0000305" key="5"/>
<organism>
    <name type="scientific">Ovis aries</name>
    <name type="common">Sheep</name>
    <dbReference type="NCBI Taxonomy" id="9940"/>
    <lineage>
        <taxon>Eukaryota</taxon>
        <taxon>Metazoa</taxon>
        <taxon>Chordata</taxon>
        <taxon>Craniata</taxon>
        <taxon>Vertebrata</taxon>
        <taxon>Euteleostomi</taxon>
        <taxon>Mammalia</taxon>
        <taxon>Eutheria</taxon>
        <taxon>Laurasiatheria</taxon>
        <taxon>Artiodactyla</taxon>
        <taxon>Ruminantia</taxon>
        <taxon>Pecora</taxon>
        <taxon>Bovidae</taxon>
        <taxon>Caprinae</taxon>
        <taxon>Ovis</taxon>
    </lineage>
</organism>
<protein>
    <recommendedName>
        <fullName>Pregnancy-associated glycoprotein 55h</fullName>
        <ecNumber>3.4.23.-</ecNumber>
    </recommendedName>
    <alternativeName>
        <fullName>ovPAG 55h</fullName>
    </alternativeName>
</protein>
<comment type="subcellular location">
    <subcellularLocation>
        <location evidence="1">Secreted</location>
        <location evidence="1">Extracellular space</location>
    </subcellularLocation>
</comment>
<comment type="tissue specificity">
    <text evidence="3">Highly expressed in the placenta between day 60 and day 100 of gestation.</text>
</comment>
<comment type="miscellaneous">
    <text evidence="3">On the 2D-gel the determined pI of this protein is: 4.6, its MW determined on 1D-gel is: 55 kDa.</text>
</comment>
<comment type="similarity">
    <text evidence="2">Belongs to the peptidase A1 family.</text>
</comment>
<reference evidence="5" key="1">
    <citation type="journal article" date="2004" name="Reprod. Nutr. Dev.">
        <title>Isolation and characterization of eight pregnancy-associated glycoproteins present at high levels in the ovine placenta between day 60 and day 100 of gestation.</title>
        <authorList>
            <person name="El Amiri B."/>
            <person name="Remy B."/>
            <person name="De Sousa N.M."/>
            <person name="Beckers J.F."/>
        </authorList>
    </citation>
    <scope>PROTEIN SEQUENCE</scope>
    <source>
        <tissue evidence="3">Fetal cotyledon</tissue>
    </source>
</reference>
<dbReference type="EC" id="3.4.23.-"/>
<dbReference type="Proteomes" id="UP000002356">
    <property type="component" value="Unplaced"/>
</dbReference>
<dbReference type="GO" id="GO:0005576">
    <property type="term" value="C:extracellular region"/>
    <property type="evidence" value="ECO:0007669"/>
    <property type="project" value="UniProtKB-SubCell"/>
</dbReference>
<dbReference type="GO" id="GO:0004190">
    <property type="term" value="F:aspartic-type endopeptidase activity"/>
    <property type="evidence" value="ECO:0007669"/>
    <property type="project" value="UniProtKB-KW"/>
</dbReference>
<dbReference type="GO" id="GO:0006508">
    <property type="term" value="P:proteolysis"/>
    <property type="evidence" value="ECO:0007669"/>
    <property type="project" value="UniProtKB-KW"/>
</dbReference>